<protein>
    <recommendedName>
        <fullName>Extended FMRFamide-7</fullName>
        <shortName evidence="4">FMRFa-7</shortName>
    </recommendedName>
</protein>
<organism>
    <name type="scientific">Namaquaphasma ookiepense</name>
    <name type="common">Gladiator bug</name>
    <dbReference type="NCBI Taxonomy" id="409167"/>
    <lineage>
        <taxon>Eukaryota</taxon>
        <taxon>Metazoa</taxon>
        <taxon>Ecdysozoa</taxon>
        <taxon>Arthropoda</taxon>
        <taxon>Hexapoda</taxon>
        <taxon>Insecta</taxon>
        <taxon>Pterygota</taxon>
        <taxon>Neoptera</taxon>
        <taxon>Polyneoptera</taxon>
        <taxon>Mantophasmatodea</taxon>
        <taxon>Austrophasmatidae</taxon>
        <taxon>Namaquaphasma</taxon>
    </lineage>
</organism>
<comment type="function">
    <text evidence="1">FMRFamides and FMRFamide-like peptides are neuropeptides.</text>
</comment>
<comment type="subcellular location">
    <subcellularLocation>
        <location evidence="6">Secreted</location>
    </subcellularLocation>
</comment>
<comment type="similarity">
    <text evidence="2">Belongs to the FARP (FMRF amide related peptide) family.</text>
</comment>
<proteinExistence type="evidence at protein level"/>
<name>FAR7_NAMOO</name>
<reference evidence="5" key="1">
    <citation type="journal article" date="2012" name="Syst. Biol.">
        <title>Peptidomics-based phylogeny and biogeography of Mantophasmatodea (Hexapoda).</title>
        <authorList>
            <person name="Predel R."/>
            <person name="Neupert S."/>
            <person name="Huetteroth W."/>
            <person name="Kahnt J."/>
            <person name="Waidelich D."/>
            <person name="Roth S."/>
        </authorList>
    </citation>
    <scope>PROTEIN SEQUENCE</scope>
    <scope>AMIDATION AT LEU-9</scope>
    <source>
        <tissue evidence="3">Thoracic perisympathetic organs</tissue>
    </source>
</reference>
<dbReference type="GO" id="GO:0005576">
    <property type="term" value="C:extracellular region"/>
    <property type="evidence" value="ECO:0007669"/>
    <property type="project" value="UniProtKB-SubCell"/>
</dbReference>
<dbReference type="GO" id="GO:0007218">
    <property type="term" value="P:neuropeptide signaling pathway"/>
    <property type="evidence" value="ECO:0007669"/>
    <property type="project" value="UniProtKB-KW"/>
</dbReference>
<feature type="peptide" id="PRO_0000420502" description="Extended FMRFamide-7">
    <location>
        <begin position="1"/>
        <end position="9"/>
    </location>
</feature>
<feature type="modified residue" description="Leucine amide" evidence="3">
    <location>
        <position position="9"/>
    </location>
</feature>
<feature type="unsure residue" description="L or I" evidence="3">
    <location>
        <position position="9"/>
    </location>
</feature>
<accession>B0M2T7</accession>
<evidence type="ECO:0000250" key="1">
    <source>
        <dbReference type="UniProtKB" id="P34405"/>
    </source>
</evidence>
<evidence type="ECO:0000255" key="2"/>
<evidence type="ECO:0000269" key="3">
    <source>
    </source>
</evidence>
<evidence type="ECO:0000303" key="4">
    <source>
    </source>
</evidence>
<evidence type="ECO:0000305" key="5"/>
<evidence type="ECO:0000305" key="6">
    <source>
    </source>
</evidence>
<keyword id="KW-0027">Amidation</keyword>
<keyword id="KW-0903">Direct protein sequencing</keyword>
<keyword id="KW-0527">Neuropeptide</keyword>
<keyword id="KW-0964">Secreted</keyword>
<sequence>ARSDNFVRL</sequence>